<comment type="function">
    <text>Probable guanine nucleotide exchange factor. Putative effector of Ras and/or Rap. Associates with the GTP-bound form of Rap 1A and H-Ras in vitro.</text>
</comment>
<comment type="subunit">
    <text evidence="1">Interacts with SAMD9.</text>
</comment>
<reference key="1">
    <citation type="journal article" date="1996" name="Oncogene">
        <title>RalGDS-like factor (Rlf) is a novel Ras and Rap 1A-associating protein.</title>
        <authorList>
            <person name="Wolthuis R.M.F."/>
            <person name="Bauer B."/>
            <person name="Van'T Veer L.J."/>
            <person name="de Vries-Smits A.M.M."/>
            <person name="Cool R.H."/>
            <person name="Spaargaren M."/>
            <person name="Wittinghofer A."/>
            <person name="Burgering B.M.T."/>
            <person name="Bos J.L."/>
        </authorList>
    </citation>
    <scope>NUCLEOTIDE SEQUENCE [MRNA]</scope>
</reference>
<reference key="2">
    <citation type="submission" date="1998-12" db="EMBL/GenBank/DDBJ databases">
        <title>Sequence of the mouse major histocompatibility complex class II region.</title>
        <authorList>
            <person name="Rowen L."/>
            <person name="Qin S."/>
            <person name="Madan A."/>
            <person name="Loretz C."/>
            <person name="Hall J."/>
            <person name="James R."/>
            <person name="Dors M."/>
            <person name="Shaffer T."/>
            <person name="Abbasi N."/>
            <person name="Ratcliffe A."/>
            <person name="Dickhoff R."/>
            <person name="Lasky S."/>
            <person name="Hood L."/>
        </authorList>
    </citation>
    <scope>NUCLEOTIDE SEQUENCE [LARGE SCALE GENOMIC DNA]</scope>
    <source>
        <strain>129/SvJ</strain>
    </source>
</reference>
<reference key="3">
    <citation type="journal article" date="2004" name="Genome Res.">
        <title>The status, quality, and expansion of the NIH full-length cDNA project: the Mammalian Gene Collection (MGC).</title>
        <authorList>
            <consortium name="The MGC Project Team"/>
        </authorList>
    </citation>
    <scope>NUCLEOTIDE SEQUENCE [LARGE SCALE MRNA]</scope>
    <source>
        <strain>C57BL/6J</strain>
    </source>
</reference>
<reference key="4">
    <citation type="journal article" date="2010" name="Cell">
        <title>A tissue-specific atlas of mouse protein phosphorylation and expression.</title>
        <authorList>
            <person name="Huttlin E.L."/>
            <person name="Jedrychowski M.P."/>
            <person name="Elias J.E."/>
            <person name="Goswami T."/>
            <person name="Rad R."/>
            <person name="Beausoleil S.A."/>
            <person name="Villen J."/>
            <person name="Haas W."/>
            <person name="Sowa M.E."/>
            <person name="Gygi S.P."/>
        </authorList>
    </citation>
    <scope>IDENTIFICATION BY MASS SPECTROMETRY [LARGE SCALE ANALYSIS]</scope>
    <source>
        <tissue>Brown adipose tissue</tissue>
        <tissue>Kidney</tissue>
        <tissue>Lung</tissue>
        <tissue>Spleen</tissue>
        <tissue>Testis</tissue>
    </source>
</reference>
<reference key="5">
    <citation type="journal article" date="1998" name="Biochemistry">
        <title>Structure determination of the Ras-binding domain of the Ral-specific guanine nucleotide exchange factor Rlf.</title>
        <authorList>
            <person name="Esser D."/>
            <person name="Bauer B."/>
            <person name="Wolthuis R.M."/>
            <person name="Wittinghofer A."/>
            <person name="Cool R.H."/>
            <person name="Bayer P."/>
        </authorList>
    </citation>
    <scope>STRUCTURE BY NMR OF 646-735</scope>
</reference>
<feature type="chain" id="PRO_0000068889" description="Ral guanine nucleotide dissociation stimulator-like 2">
    <location>
        <begin position="1"/>
        <end position="778"/>
    </location>
</feature>
<feature type="domain" description="N-terminal Ras-GEF" evidence="2">
    <location>
        <begin position="88"/>
        <end position="212"/>
    </location>
</feature>
<feature type="domain" description="Ras-GEF" evidence="4">
    <location>
        <begin position="243"/>
        <end position="513"/>
    </location>
</feature>
<feature type="domain" description="Ras-associating" evidence="3">
    <location>
        <begin position="649"/>
        <end position="736"/>
    </location>
</feature>
<feature type="region of interest" description="Disordered" evidence="5">
    <location>
        <begin position="1"/>
        <end position="59"/>
    </location>
</feature>
<feature type="region of interest" description="Disordered" evidence="5">
    <location>
        <begin position="503"/>
        <end position="524"/>
    </location>
</feature>
<feature type="region of interest" description="Disordered" evidence="5">
    <location>
        <begin position="541"/>
        <end position="564"/>
    </location>
</feature>
<feature type="region of interest" description="Disordered" evidence="5">
    <location>
        <begin position="581"/>
        <end position="647"/>
    </location>
</feature>
<feature type="region of interest" description="Disordered" evidence="5">
    <location>
        <begin position="735"/>
        <end position="769"/>
    </location>
</feature>
<feature type="compositionally biased region" description="Low complexity" evidence="5">
    <location>
        <begin position="1"/>
        <end position="15"/>
    </location>
</feature>
<feature type="compositionally biased region" description="Gly residues" evidence="5">
    <location>
        <begin position="33"/>
        <end position="42"/>
    </location>
</feature>
<feature type="compositionally biased region" description="Acidic residues" evidence="5">
    <location>
        <begin position="43"/>
        <end position="59"/>
    </location>
</feature>
<feature type="compositionally biased region" description="Low complexity" evidence="5">
    <location>
        <begin position="581"/>
        <end position="592"/>
    </location>
</feature>
<feature type="compositionally biased region" description="Polar residues" evidence="5">
    <location>
        <begin position="620"/>
        <end position="632"/>
    </location>
</feature>
<feature type="compositionally biased region" description="Low complexity" evidence="5">
    <location>
        <begin position="738"/>
        <end position="756"/>
    </location>
</feature>
<feature type="sequence conflict" description="In Ref. 1; AAC52724." evidence="6" ref="1">
    <original>H</original>
    <variation>Y</variation>
    <location>
        <position position="147"/>
    </location>
</feature>
<feature type="sequence conflict" description="In Ref. 1; AAC52724." evidence="6" ref="1">
    <original>M</original>
    <variation>T</variation>
    <location>
        <position position="402"/>
    </location>
</feature>
<feature type="strand" evidence="8">
    <location>
        <begin position="52"/>
        <end position="62"/>
    </location>
</feature>
<feature type="strand" evidence="8">
    <location>
        <begin position="65"/>
        <end position="74"/>
    </location>
</feature>
<feature type="strand" evidence="8">
    <location>
        <begin position="87"/>
        <end position="95"/>
    </location>
</feature>
<feature type="helix" evidence="8">
    <location>
        <begin position="97"/>
        <end position="104"/>
    </location>
</feature>
<feature type="helix" evidence="8">
    <location>
        <begin position="109"/>
        <end position="112"/>
    </location>
</feature>
<feature type="helix" evidence="8">
    <location>
        <begin position="116"/>
        <end position="123"/>
    </location>
</feature>
<feature type="helix" evidence="8">
    <location>
        <begin position="124"/>
        <end position="126"/>
    </location>
</feature>
<feature type="helix" evidence="8">
    <location>
        <begin position="130"/>
        <end position="142"/>
    </location>
</feature>
<feature type="turn" evidence="8">
    <location>
        <begin position="143"/>
        <end position="146"/>
    </location>
</feature>
<feature type="helix" evidence="8">
    <location>
        <begin position="149"/>
        <end position="169"/>
    </location>
</feature>
<feature type="helix" evidence="8">
    <location>
        <begin position="171"/>
        <end position="173"/>
    </location>
</feature>
<feature type="helix" evidence="9">
    <location>
        <begin position="176"/>
        <end position="178"/>
    </location>
</feature>
<feature type="helix" evidence="8">
    <location>
        <begin position="179"/>
        <end position="192"/>
    </location>
</feature>
<feature type="helix" evidence="8">
    <location>
        <begin position="205"/>
        <end position="213"/>
    </location>
</feature>
<feature type="helix" evidence="8">
    <location>
        <begin position="236"/>
        <end position="241"/>
    </location>
</feature>
<feature type="helix" evidence="8">
    <location>
        <begin position="244"/>
        <end position="260"/>
    </location>
</feature>
<feature type="helix" evidence="8">
    <location>
        <begin position="264"/>
        <end position="267"/>
    </location>
</feature>
<feature type="turn" evidence="8">
    <location>
        <begin position="269"/>
        <end position="271"/>
    </location>
</feature>
<feature type="turn" evidence="8">
    <location>
        <begin position="273"/>
        <end position="276"/>
    </location>
</feature>
<feature type="helix" evidence="8">
    <location>
        <begin position="285"/>
        <end position="305"/>
    </location>
</feature>
<feature type="strand" evidence="8">
    <location>
        <begin position="308"/>
        <end position="310"/>
    </location>
</feature>
<feature type="strand" evidence="8">
    <location>
        <begin position="312"/>
        <end position="314"/>
    </location>
</feature>
<feature type="strand" evidence="8">
    <location>
        <begin position="318"/>
        <end position="320"/>
    </location>
</feature>
<feature type="helix" evidence="8">
    <location>
        <begin position="325"/>
        <end position="344"/>
    </location>
</feature>
<feature type="helix" evidence="8">
    <location>
        <begin position="348"/>
        <end position="359"/>
    </location>
</feature>
<feature type="helix" evidence="8">
    <location>
        <begin position="361"/>
        <end position="364"/>
    </location>
</feature>
<feature type="helix" evidence="8">
    <location>
        <begin position="367"/>
        <end position="371"/>
    </location>
</feature>
<feature type="helix" evidence="8">
    <location>
        <begin position="375"/>
        <end position="385"/>
    </location>
</feature>
<feature type="turn" evidence="8">
    <location>
        <begin position="398"/>
        <end position="400"/>
    </location>
</feature>
<feature type="helix" evidence="8">
    <location>
        <begin position="433"/>
        <end position="445"/>
    </location>
</feature>
<feature type="helix" evidence="8">
    <location>
        <begin position="457"/>
        <end position="477"/>
    </location>
</feature>
<feature type="helix" evidence="8">
    <location>
        <begin position="486"/>
        <end position="494"/>
    </location>
</feature>
<feature type="helix" evidence="8">
    <location>
        <begin position="500"/>
        <end position="510"/>
    </location>
</feature>
<feature type="strand" evidence="7">
    <location>
        <begin position="650"/>
        <end position="657"/>
    </location>
</feature>
<feature type="strand" evidence="7">
    <location>
        <begin position="660"/>
        <end position="662"/>
    </location>
</feature>
<feature type="strand" evidence="7">
    <location>
        <begin position="668"/>
        <end position="672"/>
    </location>
</feature>
<feature type="helix" evidence="7">
    <location>
        <begin position="680"/>
        <end position="687"/>
    </location>
</feature>
<feature type="turn" evidence="7">
    <location>
        <begin position="688"/>
        <end position="691"/>
    </location>
</feature>
<feature type="strand" evidence="7">
    <location>
        <begin position="698"/>
        <end position="702"/>
    </location>
</feature>
<feature type="turn" evidence="7">
    <location>
        <begin position="703"/>
        <end position="706"/>
    </location>
</feature>
<feature type="helix" evidence="7">
    <location>
        <begin position="719"/>
        <end position="722"/>
    </location>
</feature>
<feature type="strand" evidence="7">
    <location>
        <begin position="727"/>
        <end position="733"/>
    </location>
</feature>
<evidence type="ECO:0000250" key="1"/>
<evidence type="ECO:0000255" key="2">
    <source>
        <dbReference type="PROSITE-ProRule" id="PRU00135"/>
    </source>
</evidence>
<evidence type="ECO:0000255" key="3">
    <source>
        <dbReference type="PROSITE-ProRule" id="PRU00166"/>
    </source>
</evidence>
<evidence type="ECO:0000255" key="4">
    <source>
        <dbReference type="PROSITE-ProRule" id="PRU00168"/>
    </source>
</evidence>
<evidence type="ECO:0000256" key="5">
    <source>
        <dbReference type="SAM" id="MobiDB-lite"/>
    </source>
</evidence>
<evidence type="ECO:0000305" key="6"/>
<evidence type="ECO:0007829" key="7">
    <source>
        <dbReference type="PDB" id="1RLF"/>
    </source>
</evidence>
<evidence type="ECO:0007829" key="8">
    <source>
        <dbReference type="PDB" id="4JGW"/>
    </source>
</evidence>
<evidence type="ECO:0007829" key="9">
    <source>
        <dbReference type="PDB" id="5CM8"/>
    </source>
</evidence>
<name>RGL2_MOUSE</name>
<sequence length="778" mass="83826">MLPRPLRLLLDTTPPGGVVLSSFRSRDPEEGGDPGGRAVGGGQEEEDEEEEEASVSVWDEEEDGATFTVTSRQYRPLDPLAPLPPPRSSRRLRAGTLEALVRHLLDARTAGADMMFTPALLATHRAFTSTPALFGLVADRLEALESHPPGELERTTGVAISVLSTWLASHPEDFGSEVKGQLDRLESFLLRTGYAAREGVVGGSADLIRNLRARVDPRAPDLPKPLALPGDSPADPTDVLVFLADHLAEQLTLLDAELFLNLIPSQCLGGLWGHRDRPGHSHLCPSVRATVTQFNKVAGAVVSSVLGATSIGEGPREVTVRPLRPPQRARLLEKWIRVAEECRLLRNFSSVYAVVSALQSSPIHRLRAAWGETTRDSLRVFSSLCQIFSEEDNYSQSRELLMQEVKPQPPVEPHSKKAPRSGFRGGGVVPYLGTFLKDLVMLDAASKDELENGYINFDKRRKEFAILSELLRLQKECRGYDLRPNSDIQQWLQGLQPLTEAQSHRVSCEVEPPGTSDSPAARTPRPTLVITQWTEVLGSVGGPTPLVSWDRPSVGGDEVPGTPAPLLTRLAQHMKWPSVSSLDSALESSPSLHSPADPGHLSPPASSPRPSRGHRRSASCGSPLSGNTGEGTSRSAGCGGGVSGPGSSDCRIIRVQMELGEDGSVYKSILVTSQDKAPSVISRVLKKNNRDSAVASEFELVQLLPGDRELTIPHSANVFYAMDGASHDFLLRQRRRPSAATPGSHSGPSASGTPPSEGGGGSFPRIKATGRKIARALF</sequence>
<protein>
    <recommendedName>
        <fullName>Ral guanine nucleotide dissociation stimulator-like 2</fullName>
        <shortName>RalGDS-like 2</shortName>
    </recommendedName>
    <alternativeName>
        <fullName>RalGDS-like factor</fullName>
    </alternativeName>
    <alternativeName>
        <fullName>Ras-associated protein RAB2L</fullName>
    </alternativeName>
</protein>
<accession>Q61193</accession>
<accession>Q9QUJ2</accession>
<dbReference type="EMBL" id="U54639">
    <property type="protein sequence ID" value="AAC52724.1"/>
    <property type="molecule type" value="mRNA"/>
</dbReference>
<dbReference type="EMBL" id="AF110520">
    <property type="protein sequence ID" value="AAC97974.1"/>
    <property type="molecule type" value="Genomic_DNA"/>
</dbReference>
<dbReference type="EMBL" id="AF100956">
    <property type="protein sequence ID" value="AAC69894.1"/>
    <property type="molecule type" value="Genomic_DNA"/>
</dbReference>
<dbReference type="EMBL" id="BC068121">
    <property type="protein sequence ID" value="AAH68121.1"/>
    <property type="molecule type" value="mRNA"/>
</dbReference>
<dbReference type="CCDS" id="CCDS28635.1"/>
<dbReference type="PIR" id="PC4379">
    <property type="entry name" value="PC4379"/>
</dbReference>
<dbReference type="RefSeq" id="NP_033085.2">
    <property type="nucleotide sequence ID" value="NM_009059.2"/>
</dbReference>
<dbReference type="PDB" id="1RLF">
    <property type="method" value="NMR"/>
    <property type="chains" value="A=646-735"/>
</dbReference>
<dbReference type="PDB" id="4JGW">
    <property type="method" value="X-ray"/>
    <property type="resolution" value="2.30 A"/>
    <property type="chains" value="A/B=50-514"/>
</dbReference>
<dbReference type="PDB" id="5CM8">
    <property type="method" value="X-ray"/>
    <property type="resolution" value="2.60 A"/>
    <property type="chains" value="A=50-514"/>
</dbReference>
<dbReference type="PDB" id="5CM9">
    <property type="method" value="X-ray"/>
    <property type="resolution" value="2.60 A"/>
    <property type="chains" value="A/B=50-514"/>
</dbReference>
<dbReference type="PDBsum" id="1RLF"/>
<dbReference type="PDBsum" id="4JGW"/>
<dbReference type="PDBsum" id="5CM8"/>
<dbReference type="PDBsum" id="5CM9"/>
<dbReference type="SMR" id="Q61193"/>
<dbReference type="BioGRID" id="202880">
    <property type="interactions" value="4"/>
</dbReference>
<dbReference type="FunCoup" id="Q61193">
    <property type="interactions" value="984"/>
</dbReference>
<dbReference type="IntAct" id="Q61193">
    <property type="interactions" value="3"/>
</dbReference>
<dbReference type="STRING" id="10090.ENSMUSP00000041082"/>
<dbReference type="GlyGen" id="Q61193">
    <property type="glycosylation" value="2 sites"/>
</dbReference>
<dbReference type="iPTMnet" id="Q61193"/>
<dbReference type="PhosphoSitePlus" id="Q61193"/>
<dbReference type="jPOST" id="Q61193"/>
<dbReference type="PaxDb" id="10090-ENSMUSP00000041082"/>
<dbReference type="PeptideAtlas" id="Q61193"/>
<dbReference type="ProteomicsDB" id="255248"/>
<dbReference type="Pumba" id="Q61193"/>
<dbReference type="Antibodypedia" id="29066">
    <property type="antibodies" value="196 antibodies from 26 providers"/>
</dbReference>
<dbReference type="DNASU" id="19732"/>
<dbReference type="Ensembl" id="ENSMUST00000047503.16">
    <property type="protein sequence ID" value="ENSMUSP00000041082.10"/>
    <property type="gene ID" value="ENSMUSG00000041354.17"/>
</dbReference>
<dbReference type="GeneID" id="19732"/>
<dbReference type="KEGG" id="mmu:19732"/>
<dbReference type="UCSC" id="uc008cag.1">
    <property type="organism name" value="mouse"/>
</dbReference>
<dbReference type="AGR" id="MGI:107483"/>
<dbReference type="CTD" id="5863"/>
<dbReference type="MGI" id="MGI:107483">
    <property type="gene designation" value="Rgl2"/>
</dbReference>
<dbReference type="VEuPathDB" id="HostDB:ENSMUSG00000041354"/>
<dbReference type="eggNOG" id="KOG3629">
    <property type="taxonomic scope" value="Eukaryota"/>
</dbReference>
<dbReference type="GeneTree" id="ENSGT00940000161403"/>
<dbReference type="HOGENOM" id="CLU_010252_0_2_1"/>
<dbReference type="InParanoid" id="Q61193"/>
<dbReference type="OMA" id="IQQWLRG"/>
<dbReference type="OrthoDB" id="26687at2759"/>
<dbReference type="PhylomeDB" id="Q61193"/>
<dbReference type="TreeFam" id="TF315204"/>
<dbReference type="BRENDA" id="6.2.1.3">
    <property type="organism ID" value="3474"/>
</dbReference>
<dbReference type="Reactome" id="R-MMU-5673001">
    <property type="pathway name" value="RAF/MAP kinase cascade"/>
</dbReference>
<dbReference type="BioGRID-ORCS" id="19732">
    <property type="hits" value="5 hits in 77 CRISPR screens"/>
</dbReference>
<dbReference type="ChiTaRS" id="Rgl2">
    <property type="organism name" value="mouse"/>
</dbReference>
<dbReference type="EvolutionaryTrace" id="Q61193"/>
<dbReference type="PRO" id="PR:Q61193"/>
<dbReference type="Proteomes" id="UP000000589">
    <property type="component" value="Chromosome 17"/>
</dbReference>
<dbReference type="RNAct" id="Q61193">
    <property type="molecule type" value="protein"/>
</dbReference>
<dbReference type="Bgee" id="ENSMUSG00000041354">
    <property type="expression patterns" value="Expressed in granulocyte and 271 other cell types or tissues"/>
</dbReference>
<dbReference type="ExpressionAtlas" id="Q61193">
    <property type="expression patterns" value="baseline and differential"/>
</dbReference>
<dbReference type="GO" id="GO:0005085">
    <property type="term" value="F:guanyl-nucleotide exchange factor activity"/>
    <property type="evidence" value="ECO:0000314"/>
    <property type="project" value="MGI"/>
</dbReference>
<dbReference type="GO" id="GO:0010667">
    <property type="term" value="P:negative regulation of cardiac muscle cell apoptotic process"/>
    <property type="evidence" value="ECO:0000314"/>
    <property type="project" value="MGI"/>
</dbReference>
<dbReference type="GO" id="GO:0051897">
    <property type="term" value="P:positive regulation of phosphatidylinositol 3-kinase/protein kinase B signal transduction"/>
    <property type="evidence" value="ECO:0000314"/>
    <property type="project" value="MGI"/>
</dbReference>
<dbReference type="GO" id="GO:0032485">
    <property type="term" value="P:regulation of Ral protein signal transduction"/>
    <property type="evidence" value="ECO:0000314"/>
    <property type="project" value="MGI"/>
</dbReference>
<dbReference type="GO" id="GO:0007264">
    <property type="term" value="P:small GTPase-mediated signal transduction"/>
    <property type="evidence" value="ECO:0007669"/>
    <property type="project" value="InterPro"/>
</dbReference>
<dbReference type="CDD" id="cd17211">
    <property type="entry name" value="RA_RGL2"/>
    <property type="match status" value="1"/>
</dbReference>
<dbReference type="CDD" id="cd00155">
    <property type="entry name" value="RasGEF"/>
    <property type="match status" value="1"/>
</dbReference>
<dbReference type="CDD" id="cd06224">
    <property type="entry name" value="REM"/>
    <property type="match status" value="1"/>
</dbReference>
<dbReference type="FunFam" id="3.10.20.90:FF:000153">
    <property type="entry name" value="Ral guanine nucleotide dissociation stimulator like 2"/>
    <property type="match status" value="1"/>
</dbReference>
<dbReference type="FunFam" id="1.10.840.10:FF:000012">
    <property type="entry name" value="Ral guanine nucleotide dissociation stimulator-like 2"/>
    <property type="match status" value="1"/>
</dbReference>
<dbReference type="FunFam" id="1.20.870.10:FF:000029">
    <property type="entry name" value="ral guanine nucleotide dissociation stimulator-like 2 isoform X2"/>
    <property type="match status" value="1"/>
</dbReference>
<dbReference type="Gene3D" id="3.10.20.90">
    <property type="entry name" value="Phosphatidylinositol 3-kinase Catalytic Subunit, Chain A, domain 1"/>
    <property type="match status" value="1"/>
</dbReference>
<dbReference type="Gene3D" id="1.10.840.10">
    <property type="entry name" value="Ras guanine-nucleotide exchange factors catalytic domain"/>
    <property type="match status" value="1"/>
</dbReference>
<dbReference type="Gene3D" id="1.20.870.10">
    <property type="entry name" value="Son of sevenless (SoS) protein Chain: S domain 1"/>
    <property type="match status" value="1"/>
</dbReference>
<dbReference type="InterPro" id="IPR000159">
    <property type="entry name" value="RA_dom"/>
</dbReference>
<dbReference type="InterPro" id="IPR008937">
    <property type="entry name" value="Ras-like_GEF"/>
</dbReference>
<dbReference type="InterPro" id="IPR000651">
    <property type="entry name" value="Ras-like_Gua-exchang_fac_N"/>
</dbReference>
<dbReference type="InterPro" id="IPR019804">
    <property type="entry name" value="Ras_G-nucl-exch_fac_CS"/>
</dbReference>
<dbReference type="InterPro" id="IPR023578">
    <property type="entry name" value="Ras_GEF_dom_sf"/>
</dbReference>
<dbReference type="InterPro" id="IPR001895">
    <property type="entry name" value="RASGEF_cat_dom"/>
</dbReference>
<dbReference type="InterPro" id="IPR036964">
    <property type="entry name" value="RASGEF_cat_dom_sf"/>
</dbReference>
<dbReference type="InterPro" id="IPR029071">
    <property type="entry name" value="Ubiquitin-like_domsf"/>
</dbReference>
<dbReference type="PANTHER" id="PTHR23113">
    <property type="entry name" value="GUANINE NUCLEOTIDE EXCHANGE FACTOR"/>
    <property type="match status" value="1"/>
</dbReference>
<dbReference type="PANTHER" id="PTHR23113:SF350">
    <property type="entry name" value="RAL GUANINE NUCLEOTIDE DISSOCIATION STIMULATOR-LIKE 2 ISOFORM X1"/>
    <property type="match status" value="1"/>
</dbReference>
<dbReference type="Pfam" id="PF00788">
    <property type="entry name" value="RA"/>
    <property type="match status" value="1"/>
</dbReference>
<dbReference type="Pfam" id="PF00617">
    <property type="entry name" value="RasGEF"/>
    <property type="match status" value="1"/>
</dbReference>
<dbReference type="Pfam" id="PF00618">
    <property type="entry name" value="RasGEF_N"/>
    <property type="match status" value="1"/>
</dbReference>
<dbReference type="SMART" id="SM00314">
    <property type="entry name" value="RA"/>
    <property type="match status" value="1"/>
</dbReference>
<dbReference type="SMART" id="SM00147">
    <property type="entry name" value="RasGEF"/>
    <property type="match status" value="1"/>
</dbReference>
<dbReference type="SMART" id="SM00229">
    <property type="entry name" value="RasGEFN"/>
    <property type="match status" value="1"/>
</dbReference>
<dbReference type="SUPFAM" id="SSF48366">
    <property type="entry name" value="Ras GEF"/>
    <property type="match status" value="1"/>
</dbReference>
<dbReference type="SUPFAM" id="SSF54236">
    <property type="entry name" value="Ubiquitin-like"/>
    <property type="match status" value="1"/>
</dbReference>
<dbReference type="PROSITE" id="PS50200">
    <property type="entry name" value="RA"/>
    <property type="match status" value="1"/>
</dbReference>
<dbReference type="PROSITE" id="PS00720">
    <property type="entry name" value="RASGEF"/>
    <property type="match status" value="1"/>
</dbReference>
<dbReference type="PROSITE" id="PS50009">
    <property type="entry name" value="RASGEF_CAT"/>
    <property type="match status" value="1"/>
</dbReference>
<dbReference type="PROSITE" id="PS50212">
    <property type="entry name" value="RASGEF_NTER"/>
    <property type="match status" value="1"/>
</dbReference>
<keyword id="KW-0002">3D-structure</keyword>
<keyword id="KW-0344">Guanine-nucleotide releasing factor</keyword>
<keyword id="KW-1185">Reference proteome</keyword>
<proteinExistence type="evidence at protein level"/>
<organism>
    <name type="scientific">Mus musculus</name>
    <name type="common">Mouse</name>
    <dbReference type="NCBI Taxonomy" id="10090"/>
    <lineage>
        <taxon>Eukaryota</taxon>
        <taxon>Metazoa</taxon>
        <taxon>Chordata</taxon>
        <taxon>Craniata</taxon>
        <taxon>Vertebrata</taxon>
        <taxon>Euteleostomi</taxon>
        <taxon>Mammalia</taxon>
        <taxon>Eutheria</taxon>
        <taxon>Euarchontoglires</taxon>
        <taxon>Glires</taxon>
        <taxon>Rodentia</taxon>
        <taxon>Myomorpha</taxon>
        <taxon>Muroidea</taxon>
        <taxon>Muridae</taxon>
        <taxon>Murinae</taxon>
        <taxon>Mus</taxon>
        <taxon>Mus</taxon>
    </lineage>
</organism>
<gene>
    <name type="primary">Rgl2</name>
    <name type="synonym">Rab2l</name>
    <name type="synonym">Rlf</name>
</gene>